<gene>
    <name evidence="1" type="primary">cysG</name>
    <name type="ordered locus">plu0708</name>
</gene>
<keyword id="KW-0169">Cobalamin biosynthesis</keyword>
<keyword id="KW-0456">Lyase</keyword>
<keyword id="KW-0489">Methyltransferase</keyword>
<keyword id="KW-0511">Multifunctional enzyme</keyword>
<keyword id="KW-0520">NAD</keyword>
<keyword id="KW-0560">Oxidoreductase</keyword>
<keyword id="KW-0597">Phosphoprotein</keyword>
<keyword id="KW-0627">Porphyrin biosynthesis</keyword>
<keyword id="KW-1185">Reference proteome</keyword>
<keyword id="KW-0949">S-adenosyl-L-methionine</keyword>
<keyword id="KW-0808">Transferase</keyword>
<feature type="chain" id="PRO_0000330530" description="Siroheme synthase">
    <location>
        <begin position="1"/>
        <end position="470"/>
    </location>
</feature>
<feature type="region of interest" description="Precorrin-2 dehydrogenase /sirohydrochlorin ferrochelatase" evidence="1">
    <location>
        <begin position="1"/>
        <end position="203"/>
    </location>
</feature>
<feature type="region of interest" description="Uroporphyrinogen-III C-methyltransferase" evidence="1">
    <location>
        <begin position="214"/>
        <end position="470"/>
    </location>
</feature>
<feature type="active site" description="Proton acceptor" evidence="1">
    <location>
        <position position="246"/>
    </location>
</feature>
<feature type="active site" description="Proton donor" evidence="1">
    <location>
        <position position="268"/>
    </location>
</feature>
<feature type="binding site" evidence="1">
    <location>
        <begin position="22"/>
        <end position="23"/>
    </location>
    <ligand>
        <name>NAD(+)</name>
        <dbReference type="ChEBI" id="CHEBI:57540"/>
    </ligand>
</feature>
<feature type="binding site" evidence="1">
    <location>
        <begin position="43"/>
        <end position="44"/>
    </location>
    <ligand>
        <name>NAD(+)</name>
        <dbReference type="ChEBI" id="CHEBI:57540"/>
    </ligand>
</feature>
<feature type="binding site" evidence="1">
    <location>
        <position position="223"/>
    </location>
    <ligand>
        <name>S-adenosyl-L-methionine</name>
        <dbReference type="ChEBI" id="CHEBI:59789"/>
    </ligand>
</feature>
<feature type="binding site" evidence="1">
    <location>
        <begin position="299"/>
        <end position="301"/>
    </location>
    <ligand>
        <name>S-adenosyl-L-methionine</name>
        <dbReference type="ChEBI" id="CHEBI:59789"/>
    </ligand>
</feature>
<feature type="binding site" evidence="1">
    <location>
        <position position="304"/>
    </location>
    <ligand>
        <name>S-adenosyl-L-methionine</name>
        <dbReference type="ChEBI" id="CHEBI:59789"/>
    </ligand>
</feature>
<feature type="binding site" evidence="1">
    <location>
        <begin position="329"/>
        <end position="330"/>
    </location>
    <ligand>
        <name>S-adenosyl-L-methionine</name>
        <dbReference type="ChEBI" id="CHEBI:59789"/>
    </ligand>
</feature>
<feature type="binding site" evidence="1">
    <location>
        <position position="381"/>
    </location>
    <ligand>
        <name>S-adenosyl-L-methionine</name>
        <dbReference type="ChEBI" id="CHEBI:59789"/>
    </ligand>
</feature>
<feature type="binding site" evidence="1">
    <location>
        <position position="410"/>
    </location>
    <ligand>
        <name>S-adenosyl-L-methionine</name>
        <dbReference type="ChEBI" id="CHEBI:59789"/>
    </ligand>
</feature>
<feature type="modified residue" description="Phosphoserine" evidence="1">
    <location>
        <position position="128"/>
    </location>
</feature>
<dbReference type="EC" id="2.1.1.107" evidence="1"/>
<dbReference type="EC" id="1.3.1.76" evidence="1"/>
<dbReference type="EC" id="4.99.1.4" evidence="1"/>
<dbReference type="EMBL" id="BX571861">
    <property type="protein sequence ID" value="CAE13003.1"/>
    <property type="molecule type" value="Genomic_DNA"/>
</dbReference>
<dbReference type="RefSeq" id="WP_011145084.1">
    <property type="nucleotide sequence ID" value="NC_005126.1"/>
</dbReference>
<dbReference type="SMR" id="Q7N8L2"/>
<dbReference type="STRING" id="243265.plu0708"/>
<dbReference type="GeneID" id="48847003"/>
<dbReference type="KEGG" id="plu:plu0708"/>
<dbReference type="eggNOG" id="COG0007">
    <property type="taxonomic scope" value="Bacteria"/>
</dbReference>
<dbReference type="eggNOG" id="COG1648">
    <property type="taxonomic scope" value="Bacteria"/>
</dbReference>
<dbReference type="HOGENOM" id="CLU_011276_2_1_6"/>
<dbReference type="OrthoDB" id="9815856at2"/>
<dbReference type="UniPathway" id="UPA00148">
    <property type="reaction ID" value="UER00211"/>
</dbReference>
<dbReference type="UniPathway" id="UPA00148">
    <property type="reaction ID" value="UER00222"/>
</dbReference>
<dbReference type="UniPathway" id="UPA00262">
    <property type="reaction ID" value="UER00211"/>
</dbReference>
<dbReference type="UniPathway" id="UPA00262">
    <property type="reaction ID" value="UER00222"/>
</dbReference>
<dbReference type="UniPathway" id="UPA00262">
    <property type="reaction ID" value="UER00376"/>
</dbReference>
<dbReference type="Proteomes" id="UP000002514">
    <property type="component" value="Chromosome"/>
</dbReference>
<dbReference type="GO" id="GO:0051287">
    <property type="term" value="F:NAD binding"/>
    <property type="evidence" value="ECO:0007669"/>
    <property type="project" value="InterPro"/>
</dbReference>
<dbReference type="GO" id="GO:0043115">
    <property type="term" value="F:precorrin-2 dehydrogenase activity"/>
    <property type="evidence" value="ECO:0007669"/>
    <property type="project" value="UniProtKB-UniRule"/>
</dbReference>
<dbReference type="GO" id="GO:0051266">
    <property type="term" value="F:sirohydrochlorin ferrochelatase activity"/>
    <property type="evidence" value="ECO:0007669"/>
    <property type="project" value="UniProtKB-EC"/>
</dbReference>
<dbReference type="GO" id="GO:0004851">
    <property type="term" value="F:uroporphyrin-III C-methyltransferase activity"/>
    <property type="evidence" value="ECO:0007669"/>
    <property type="project" value="UniProtKB-UniRule"/>
</dbReference>
<dbReference type="GO" id="GO:0009236">
    <property type="term" value="P:cobalamin biosynthetic process"/>
    <property type="evidence" value="ECO:0007669"/>
    <property type="project" value="UniProtKB-UniRule"/>
</dbReference>
<dbReference type="GO" id="GO:0032259">
    <property type="term" value="P:methylation"/>
    <property type="evidence" value="ECO:0007669"/>
    <property type="project" value="UniProtKB-KW"/>
</dbReference>
<dbReference type="GO" id="GO:0019354">
    <property type="term" value="P:siroheme biosynthetic process"/>
    <property type="evidence" value="ECO:0007669"/>
    <property type="project" value="UniProtKB-UniRule"/>
</dbReference>
<dbReference type="CDD" id="cd11642">
    <property type="entry name" value="SUMT"/>
    <property type="match status" value="1"/>
</dbReference>
<dbReference type="FunFam" id="3.30.160.110:FF:000001">
    <property type="entry name" value="Siroheme synthase"/>
    <property type="match status" value="1"/>
</dbReference>
<dbReference type="FunFam" id="3.30.950.10:FF:000001">
    <property type="entry name" value="Siroheme synthase"/>
    <property type="match status" value="1"/>
</dbReference>
<dbReference type="FunFam" id="3.40.1010.10:FF:000001">
    <property type="entry name" value="Siroheme synthase"/>
    <property type="match status" value="1"/>
</dbReference>
<dbReference type="Gene3D" id="3.40.1010.10">
    <property type="entry name" value="Cobalt-precorrin-4 Transmethylase, Domain 1"/>
    <property type="match status" value="1"/>
</dbReference>
<dbReference type="Gene3D" id="3.30.950.10">
    <property type="entry name" value="Methyltransferase, Cobalt-precorrin-4 Transmethylase, Domain 2"/>
    <property type="match status" value="1"/>
</dbReference>
<dbReference type="Gene3D" id="3.40.50.720">
    <property type="entry name" value="NAD(P)-binding Rossmann-like Domain"/>
    <property type="match status" value="1"/>
</dbReference>
<dbReference type="Gene3D" id="1.10.8.210">
    <property type="entry name" value="Sirohaem synthase, dimerisation domain"/>
    <property type="match status" value="1"/>
</dbReference>
<dbReference type="Gene3D" id="3.30.160.110">
    <property type="entry name" value="Siroheme synthase, domain 2"/>
    <property type="match status" value="1"/>
</dbReference>
<dbReference type="HAMAP" id="MF_01646">
    <property type="entry name" value="Siroheme_synth"/>
    <property type="match status" value="1"/>
</dbReference>
<dbReference type="InterPro" id="IPR000878">
    <property type="entry name" value="4pyrrol_Mease"/>
</dbReference>
<dbReference type="InterPro" id="IPR035996">
    <property type="entry name" value="4pyrrol_Methylase_sf"/>
</dbReference>
<dbReference type="InterPro" id="IPR014777">
    <property type="entry name" value="4pyrrole_Mease_sub1"/>
</dbReference>
<dbReference type="InterPro" id="IPR014776">
    <property type="entry name" value="4pyrrole_Mease_sub2"/>
</dbReference>
<dbReference type="InterPro" id="IPR006366">
    <property type="entry name" value="CobA/CysG_C"/>
</dbReference>
<dbReference type="InterPro" id="IPR036291">
    <property type="entry name" value="NAD(P)-bd_dom_sf"/>
</dbReference>
<dbReference type="InterPro" id="IPR050161">
    <property type="entry name" value="Siro_Cobalamin_biosynth"/>
</dbReference>
<dbReference type="InterPro" id="IPR037115">
    <property type="entry name" value="Sirohaem_synt_dimer_dom_sf"/>
</dbReference>
<dbReference type="InterPro" id="IPR012409">
    <property type="entry name" value="Sirohaem_synth"/>
</dbReference>
<dbReference type="InterPro" id="IPR028281">
    <property type="entry name" value="Sirohaem_synthase_central"/>
</dbReference>
<dbReference type="InterPro" id="IPR019478">
    <property type="entry name" value="Sirohaem_synthase_dimer_dom"/>
</dbReference>
<dbReference type="InterPro" id="IPR006367">
    <property type="entry name" value="Sirohaem_synthase_N"/>
</dbReference>
<dbReference type="InterPro" id="IPR003043">
    <property type="entry name" value="Uropor_MeTrfase_CS"/>
</dbReference>
<dbReference type="NCBIfam" id="TIGR01469">
    <property type="entry name" value="cobA_cysG_Cterm"/>
    <property type="match status" value="1"/>
</dbReference>
<dbReference type="NCBIfam" id="TIGR01470">
    <property type="entry name" value="cysG_Nterm"/>
    <property type="match status" value="1"/>
</dbReference>
<dbReference type="NCBIfam" id="NF004790">
    <property type="entry name" value="PRK06136.1"/>
    <property type="match status" value="1"/>
</dbReference>
<dbReference type="NCBIfam" id="NF007922">
    <property type="entry name" value="PRK10637.1"/>
    <property type="match status" value="1"/>
</dbReference>
<dbReference type="PANTHER" id="PTHR45790:SF1">
    <property type="entry name" value="SIROHEME SYNTHASE"/>
    <property type="match status" value="1"/>
</dbReference>
<dbReference type="PANTHER" id="PTHR45790">
    <property type="entry name" value="SIROHEME SYNTHASE-RELATED"/>
    <property type="match status" value="1"/>
</dbReference>
<dbReference type="Pfam" id="PF10414">
    <property type="entry name" value="CysG_dimeriser"/>
    <property type="match status" value="1"/>
</dbReference>
<dbReference type="Pfam" id="PF13241">
    <property type="entry name" value="NAD_binding_7"/>
    <property type="match status" value="1"/>
</dbReference>
<dbReference type="Pfam" id="PF14824">
    <property type="entry name" value="Sirohm_synth_M"/>
    <property type="match status" value="1"/>
</dbReference>
<dbReference type="Pfam" id="PF00590">
    <property type="entry name" value="TP_methylase"/>
    <property type="match status" value="1"/>
</dbReference>
<dbReference type="PIRSF" id="PIRSF036426">
    <property type="entry name" value="Sirohaem_synth"/>
    <property type="match status" value="1"/>
</dbReference>
<dbReference type="SUPFAM" id="SSF51735">
    <property type="entry name" value="NAD(P)-binding Rossmann-fold domains"/>
    <property type="match status" value="1"/>
</dbReference>
<dbReference type="SUPFAM" id="SSF75615">
    <property type="entry name" value="Siroheme synthase middle domains-like"/>
    <property type="match status" value="1"/>
</dbReference>
<dbReference type="SUPFAM" id="SSF53790">
    <property type="entry name" value="Tetrapyrrole methylase"/>
    <property type="match status" value="1"/>
</dbReference>
<dbReference type="PROSITE" id="PS00839">
    <property type="entry name" value="SUMT_1"/>
    <property type="match status" value="1"/>
</dbReference>
<dbReference type="PROSITE" id="PS00840">
    <property type="entry name" value="SUMT_2"/>
    <property type="match status" value="1"/>
</dbReference>
<comment type="function">
    <text evidence="1">Multifunctional enzyme that catalyzes the SAM-dependent methylations of uroporphyrinogen III at position C-2 and C-7 to form precorrin-2 via precorrin-1. Then it catalyzes the NAD-dependent ring dehydrogenation of precorrin-2 to yield sirohydrochlorin. Finally, it catalyzes the ferrochelation of sirohydrochlorin to yield siroheme.</text>
</comment>
<comment type="catalytic activity">
    <reaction evidence="1">
        <text>uroporphyrinogen III + 2 S-adenosyl-L-methionine = precorrin-2 + 2 S-adenosyl-L-homocysteine + H(+)</text>
        <dbReference type="Rhea" id="RHEA:32459"/>
        <dbReference type="ChEBI" id="CHEBI:15378"/>
        <dbReference type="ChEBI" id="CHEBI:57308"/>
        <dbReference type="ChEBI" id="CHEBI:57856"/>
        <dbReference type="ChEBI" id="CHEBI:58827"/>
        <dbReference type="ChEBI" id="CHEBI:59789"/>
        <dbReference type="EC" id="2.1.1.107"/>
    </reaction>
</comment>
<comment type="catalytic activity">
    <reaction evidence="1">
        <text>precorrin-2 + NAD(+) = sirohydrochlorin + NADH + 2 H(+)</text>
        <dbReference type="Rhea" id="RHEA:15613"/>
        <dbReference type="ChEBI" id="CHEBI:15378"/>
        <dbReference type="ChEBI" id="CHEBI:57540"/>
        <dbReference type="ChEBI" id="CHEBI:57945"/>
        <dbReference type="ChEBI" id="CHEBI:58351"/>
        <dbReference type="ChEBI" id="CHEBI:58827"/>
        <dbReference type="EC" id="1.3.1.76"/>
    </reaction>
</comment>
<comment type="catalytic activity">
    <reaction evidence="1">
        <text>siroheme + 2 H(+) = sirohydrochlorin + Fe(2+)</text>
        <dbReference type="Rhea" id="RHEA:24360"/>
        <dbReference type="ChEBI" id="CHEBI:15378"/>
        <dbReference type="ChEBI" id="CHEBI:29033"/>
        <dbReference type="ChEBI" id="CHEBI:58351"/>
        <dbReference type="ChEBI" id="CHEBI:60052"/>
        <dbReference type="EC" id="4.99.1.4"/>
    </reaction>
</comment>
<comment type="pathway">
    <text evidence="1">Cofactor biosynthesis; adenosylcobalamin biosynthesis; precorrin-2 from uroporphyrinogen III: step 1/1.</text>
</comment>
<comment type="pathway">
    <text evidence="1">Cofactor biosynthesis; adenosylcobalamin biosynthesis; sirohydrochlorin from precorrin-2: step 1/1.</text>
</comment>
<comment type="pathway">
    <text evidence="1">Porphyrin-containing compound metabolism; siroheme biosynthesis; precorrin-2 from uroporphyrinogen III: step 1/1.</text>
</comment>
<comment type="pathway">
    <text evidence="1">Porphyrin-containing compound metabolism; siroheme biosynthesis; siroheme from sirohydrochlorin: step 1/1.</text>
</comment>
<comment type="pathway">
    <text evidence="1">Porphyrin-containing compound metabolism; siroheme biosynthesis; sirohydrochlorin from precorrin-2: step 1/1.</text>
</comment>
<comment type="similarity">
    <text evidence="1">In the N-terminal section; belongs to the precorrin-2 dehydrogenase / sirohydrochlorin ferrochelatase family.</text>
</comment>
<comment type="similarity">
    <text evidence="1">In the C-terminal section; belongs to the precorrin methyltransferase family.</text>
</comment>
<accession>Q7N8L2</accession>
<proteinExistence type="inferred from homology"/>
<protein>
    <recommendedName>
        <fullName evidence="1">Siroheme synthase</fullName>
    </recommendedName>
    <domain>
        <recommendedName>
            <fullName evidence="1">Uroporphyrinogen-III C-methyltransferase</fullName>
            <shortName evidence="1">Urogen III methylase</shortName>
            <ecNumber evidence="1">2.1.1.107</ecNumber>
        </recommendedName>
        <alternativeName>
            <fullName evidence="1">SUMT</fullName>
        </alternativeName>
        <alternativeName>
            <fullName evidence="1">Uroporphyrinogen III methylase</fullName>
            <shortName evidence="1">UROM</shortName>
        </alternativeName>
    </domain>
    <domain>
        <recommendedName>
            <fullName evidence="1">Precorrin-2 dehydrogenase</fullName>
            <ecNumber evidence="1">1.3.1.76</ecNumber>
        </recommendedName>
    </domain>
    <domain>
        <recommendedName>
            <fullName evidence="1">Sirohydrochlorin ferrochelatase</fullName>
            <ecNumber evidence="1">4.99.1.4</ecNumber>
        </recommendedName>
    </domain>
</protein>
<organism>
    <name type="scientific">Photorhabdus laumondii subsp. laumondii (strain DSM 15139 / CIP 105565 / TT01)</name>
    <name type="common">Photorhabdus luminescens subsp. laumondii</name>
    <dbReference type="NCBI Taxonomy" id="243265"/>
    <lineage>
        <taxon>Bacteria</taxon>
        <taxon>Pseudomonadati</taxon>
        <taxon>Pseudomonadota</taxon>
        <taxon>Gammaproteobacteria</taxon>
        <taxon>Enterobacterales</taxon>
        <taxon>Morganellaceae</taxon>
        <taxon>Photorhabdus</taxon>
    </lineage>
</organism>
<evidence type="ECO:0000255" key="1">
    <source>
        <dbReference type="HAMAP-Rule" id="MF_01646"/>
    </source>
</evidence>
<name>CYSG_PHOLL</name>
<reference key="1">
    <citation type="journal article" date="2003" name="Nat. Biotechnol.">
        <title>The genome sequence of the entomopathogenic bacterium Photorhabdus luminescens.</title>
        <authorList>
            <person name="Duchaud E."/>
            <person name="Rusniok C."/>
            <person name="Frangeul L."/>
            <person name="Buchrieser C."/>
            <person name="Givaudan A."/>
            <person name="Taourit S."/>
            <person name="Bocs S."/>
            <person name="Boursaux-Eude C."/>
            <person name="Chandler M."/>
            <person name="Charles J.-F."/>
            <person name="Dassa E."/>
            <person name="Derose R."/>
            <person name="Derzelle S."/>
            <person name="Freyssinet G."/>
            <person name="Gaudriault S."/>
            <person name="Medigue C."/>
            <person name="Lanois A."/>
            <person name="Powell K."/>
            <person name="Siguier P."/>
            <person name="Vincent R."/>
            <person name="Wingate V."/>
            <person name="Zouine M."/>
            <person name="Glaser P."/>
            <person name="Boemare N."/>
            <person name="Danchin A."/>
            <person name="Kunst F."/>
        </authorList>
    </citation>
    <scope>NUCLEOTIDE SEQUENCE [LARGE SCALE GENOMIC DNA]</scope>
    <source>
        <strain>DSM 15139 / CIP 105565 / TT01</strain>
    </source>
</reference>
<sequence>MDYLPIFVELKGRLVLLVGGGEVAARKATLLLRAGALLQVVAPELCSELQQRYQAGELEWYQGEFQPEYLDGIFLVIAATDDRILNHQVFSEADKRSILVNVVDDQVHCSFIFPSIIDRSPVLVAISSAGKAPVLARLIREKLEALLPSSLGTMAKIAGKWRERVKQRLTSMRQRRSFWEQAFNGRFAMLVANGQIQQAEKQLEQQLEQSDLQGELALVGAGPGDPGLLTLKGLQVIQQADVVLYDHLVSSDVLDLIRRDADKICVGKRAGNHSVSQEETNRLIVKFARQGKKVVRLKGGDPFIFGRGGEELQVAASAGIPFQVVPGITAAIGATAYAGIPLTHREHSQSITFITGHCREKGNELDWPALARGHQTLVIYMGTVKAALISHQLILHGRAEDTPVAVIGCGTRLEQQVLTGTLLELEQLAQQAPSPALLVVGEVAQLHHQIAWFGQQSIAKISRPAVVDFA</sequence>